<comment type="function">
    <text evidence="1 4 7 8">Oxidase that catalyzes the oxidation of medium and long chain hydroxyacids such as 2-hydroxyhexadecanoate, 2-hydroxyoctanoate, 2-hydroxyhexanoate and 2-hydroxybutanoate, to the correspondong 2-oxoacids (PubMed:15683236, PubMed:3061453, PubMed:8508789). Its role in the oxidation of 2-hydroxy fatty acids may contribute to the general pathway of fatty acid alpha-oxidation (By similarity). Can also use mandelate as substrate (PubMed:3061453). Active in vitro with the artificial electron acceptor 2,6-dichlorophenolindophenol (DCIP), but O2 is believed to be the physiological electron acceptor, leading to the production of H2O2 (PubMed:15683236, PubMed:3061453, PubMed:8508789).</text>
</comment>
<comment type="catalytic activity">
    <reaction evidence="12 13 14">
        <text>a (2S)-2-hydroxycarboxylate + O2 = a 2-oxocarboxylate + H2O2</text>
        <dbReference type="Rhea" id="RHEA:16789"/>
        <dbReference type="ChEBI" id="CHEBI:15379"/>
        <dbReference type="ChEBI" id="CHEBI:16240"/>
        <dbReference type="ChEBI" id="CHEBI:35179"/>
        <dbReference type="ChEBI" id="CHEBI:58123"/>
        <dbReference type="EC" id="1.1.3.15"/>
    </reaction>
    <physiologicalReaction direction="left-to-right" evidence="12 13 14">
        <dbReference type="Rhea" id="RHEA:16790"/>
    </physiologicalReaction>
</comment>
<comment type="catalytic activity">
    <reaction evidence="12">
        <text>2-hydroxyoctanoate + O2 = 2-oxooctanoate + H2O2</text>
        <dbReference type="Rhea" id="RHEA:67940"/>
        <dbReference type="ChEBI" id="CHEBI:15379"/>
        <dbReference type="ChEBI" id="CHEBI:16240"/>
        <dbReference type="ChEBI" id="CHEBI:133514"/>
        <dbReference type="ChEBI" id="CHEBI:176689"/>
    </reaction>
    <physiologicalReaction direction="left-to-right" evidence="12">
        <dbReference type="Rhea" id="RHEA:67941"/>
    </physiologicalReaction>
</comment>
<comment type="catalytic activity">
    <reaction evidence="12">
        <text>2-hydroxyhexadecanoate + O2 = 2-oxohexadecanoate + H2O2</text>
        <dbReference type="Rhea" id="RHEA:67944"/>
        <dbReference type="ChEBI" id="CHEBI:15379"/>
        <dbReference type="ChEBI" id="CHEBI:16240"/>
        <dbReference type="ChEBI" id="CHEBI:65097"/>
        <dbReference type="ChEBI" id="CHEBI:176593"/>
    </reaction>
    <physiologicalReaction direction="left-to-right" evidence="12">
        <dbReference type="Rhea" id="RHEA:67945"/>
    </physiologicalReaction>
</comment>
<comment type="catalytic activity">
    <reaction evidence="13">
        <text>2-hydroxyhexanoate + O2 = 2-oxohexanoate + H2O2</text>
        <dbReference type="Rhea" id="RHEA:69372"/>
        <dbReference type="ChEBI" id="CHEBI:15379"/>
        <dbReference type="ChEBI" id="CHEBI:16240"/>
        <dbReference type="ChEBI" id="CHEBI:35177"/>
        <dbReference type="ChEBI" id="CHEBI:133738"/>
    </reaction>
    <physiologicalReaction direction="left-to-right" evidence="13">
        <dbReference type="Rhea" id="RHEA:69373"/>
    </physiologicalReaction>
</comment>
<comment type="catalytic activity">
    <reaction evidence="13">
        <text>mandelate + O2 = phenylglyoxylate + H2O2</text>
        <dbReference type="Rhea" id="RHEA:68968"/>
        <dbReference type="ChEBI" id="CHEBI:15379"/>
        <dbReference type="ChEBI" id="CHEBI:16240"/>
        <dbReference type="ChEBI" id="CHEBI:25147"/>
        <dbReference type="ChEBI" id="CHEBI:36656"/>
    </reaction>
    <physiologicalReaction direction="left-to-right" evidence="13">
        <dbReference type="Rhea" id="RHEA:68969"/>
    </physiologicalReaction>
</comment>
<comment type="cofactor">
    <cofactor evidence="4 6 7 8">
        <name>FMN</name>
        <dbReference type="ChEBI" id="CHEBI:58210"/>
    </cofactor>
    <text evidence="4 6 7">Binds 1 FMN per subunit.</text>
</comment>
<comment type="activity regulation">
    <text evidence="6">Is inhibited in vitro by CCPST (4-carboxy-5-(4-chlorophenyl)sulfanyl-1,2,3-thiadiazole).</text>
</comment>
<comment type="biophysicochemical properties">
    <kinetics>
        <KM evidence="4">0.046 mM for L-2-hydroxyoctanoate (with DCIP as electron acceptor)</KM>
        <KM evidence="4">1.36 mM for L-2-hydroxyhexadecanoate (with DCIP as electron acceptor)</KM>
        <KM evidence="8">0.69 mM for DL-2-hydroxybutanoate (with DCIP as electron acceptor)</KM>
        <KM evidence="7">0.6 mM for L-2-hydroxybutanoate (with DCIP as electron acceptor)</KM>
        <KM evidence="7">0.25 mM for L-2-hydroxyhexanoate (with DCIP as electron acceptor)</KM>
        <KM evidence="7">0.8 mM for L-mandelate (with DCIP as electron acceptor)</KM>
        <Vmax evidence="7">12.0 umol/min/mg enzyme with 2-hydroxybutanoate as substrate and DCIP as electron acceptor</Vmax>
        <Vmax evidence="7">5.8 umol/min/mg enzyme with 2-hydroxyhexanoate as substrate and DCIP as electron acceptor</Vmax>
        <Vmax evidence="7">21.0 umol/min/mg enzyme with L-mandelate as substrate and DCIP as electron acceptor</Vmax>
        <text evidence="4 8">kcat is 0.99 sec(-1) for the oxidation of L-2-hydroxyoctanoate with DCIP instead of O2 as electron acceptor. kcat is 0.34 sec(-1) for the oxidation of L-2-hydroxyhexadecanoate with DCIP instead of O2 as electron acceptor (PubMed:15683236). kcat is 1.66 sec(-1) for the oxidation of DL-2-hydroxybutanoate with DCIP instead of O2 as electron acceptor (PubMed:8508789).</text>
    </kinetics>
</comment>
<comment type="subunit">
    <text evidence="4 8">Homotetramer (PubMed:8508789). Could also form homooctamer.</text>
</comment>
<comment type="subcellular location">
    <subcellularLocation>
        <location>Peroxisome</location>
    </subcellularLocation>
</comment>
<comment type="tissue specificity">
    <text evidence="5 8">Expressed in kidney.</text>
</comment>
<comment type="similarity">
    <text evidence="3">Belongs to the FMN-dependent alpha-hydroxy acid dehydrogenase family.</text>
</comment>
<keyword id="KW-0002">3D-structure</keyword>
<keyword id="KW-0903">Direct protein sequencing</keyword>
<keyword id="KW-0276">Fatty acid metabolism</keyword>
<keyword id="KW-0285">Flavoprotein</keyword>
<keyword id="KW-0288">FMN</keyword>
<keyword id="KW-0443">Lipid metabolism</keyword>
<keyword id="KW-0560">Oxidoreductase</keyword>
<keyword id="KW-0576">Peroxisome</keyword>
<keyword id="KW-0597">Phosphoprotein</keyword>
<keyword id="KW-1185">Reference proteome</keyword>
<name>HAOX2_RAT</name>
<dbReference type="EC" id="1.1.3.15" evidence="12 13 14"/>
<dbReference type="EMBL" id="X67156">
    <property type="protein sequence ID" value="CAA47629.1"/>
    <property type="molecule type" value="mRNA"/>
</dbReference>
<dbReference type="EMBL" id="BC078781">
    <property type="protein sequence ID" value="AAH78781.1"/>
    <property type="molecule type" value="mRNA"/>
</dbReference>
<dbReference type="PIR" id="S33322">
    <property type="entry name" value="S33322"/>
</dbReference>
<dbReference type="RefSeq" id="NP_114471.1">
    <property type="nucleotide sequence ID" value="NM_032082.2"/>
</dbReference>
<dbReference type="RefSeq" id="XP_063138714.1">
    <property type="nucleotide sequence ID" value="XM_063282644.1"/>
</dbReference>
<dbReference type="PDB" id="1TB3">
    <property type="method" value="X-ray"/>
    <property type="resolution" value="2.30 A"/>
    <property type="chains" value="A/B/C/D/E/F/G/H=2-353"/>
</dbReference>
<dbReference type="PDB" id="3SGZ">
    <property type="method" value="X-ray"/>
    <property type="resolution" value="1.35 A"/>
    <property type="chains" value="A/B/C=2-353"/>
</dbReference>
<dbReference type="PDBsum" id="1TB3"/>
<dbReference type="PDBsum" id="3SGZ"/>
<dbReference type="SMR" id="Q07523"/>
<dbReference type="FunCoup" id="Q07523">
    <property type="interactions" value="203"/>
</dbReference>
<dbReference type="IntAct" id="Q07523">
    <property type="interactions" value="1"/>
</dbReference>
<dbReference type="STRING" id="10116.ENSRNOP00000074018"/>
<dbReference type="BindingDB" id="Q07523"/>
<dbReference type="ChEMBL" id="CHEMBL2021745"/>
<dbReference type="iPTMnet" id="Q07523"/>
<dbReference type="PhosphoSitePlus" id="Q07523"/>
<dbReference type="PaxDb" id="10116-ENSRNOP00000040223"/>
<dbReference type="Ensembl" id="ENSRNOT00000046942.3">
    <property type="protein sequence ID" value="ENSRNOP00000040223.1"/>
    <property type="gene ID" value="ENSRNOG00000019470.7"/>
</dbReference>
<dbReference type="GeneID" id="84029"/>
<dbReference type="KEGG" id="rno:84029"/>
<dbReference type="UCSC" id="RGD:70972">
    <property type="organism name" value="rat"/>
</dbReference>
<dbReference type="AGR" id="RGD:70972"/>
<dbReference type="CTD" id="51179"/>
<dbReference type="RGD" id="70972">
    <property type="gene designation" value="Hao2"/>
</dbReference>
<dbReference type="eggNOG" id="KOG0538">
    <property type="taxonomic scope" value="Eukaryota"/>
</dbReference>
<dbReference type="GeneTree" id="ENSGT00390000018717"/>
<dbReference type="HOGENOM" id="CLU_020639_6_1_1"/>
<dbReference type="InParanoid" id="Q07523"/>
<dbReference type="OMA" id="WADFQYE"/>
<dbReference type="PhylomeDB" id="Q07523"/>
<dbReference type="TreeFam" id="TF313363"/>
<dbReference type="BRENDA" id="1.1.3.15">
    <property type="organism ID" value="5301"/>
</dbReference>
<dbReference type="Reactome" id="R-RNO-390918">
    <property type="pathway name" value="Peroxisomal lipid metabolism"/>
</dbReference>
<dbReference type="Reactome" id="R-RNO-9033241">
    <property type="pathway name" value="Peroxisomal protein import"/>
</dbReference>
<dbReference type="SABIO-RK" id="Q07523"/>
<dbReference type="EvolutionaryTrace" id="Q07523"/>
<dbReference type="PRO" id="PR:Q07523"/>
<dbReference type="Proteomes" id="UP000002494">
    <property type="component" value="Chromosome 2"/>
</dbReference>
<dbReference type="Bgee" id="ENSRNOG00000019470">
    <property type="expression patterns" value="Expressed in adult mammalian kidney and 15 other cell types or tissues"/>
</dbReference>
<dbReference type="ExpressionAtlas" id="Q07523">
    <property type="expression patterns" value="baseline and differential"/>
</dbReference>
<dbReference type="GO" id="GO:0005782">
    <property type="term" value="C:peroxisomal matrix"/>
    <property type="evidence" value="ECO:0000266"/>
    <property type="project" value="RGD"/>
</dbReference>
<dbReference type="GO" id="GO:0005777">
    <property type="term" value="C:peroxisome"/>
    <property type="evidence" value="ECO:0000314"/>
    <property type="project" value="HGNC-UCL"/>
</dbReference>
<dbReference type="GO" id="GO:0003973">
    <property type="term" value="F:(S)-2-hydroxy-acid oxidase activity"/>
    <property type="evidence" value="ECO:0000314"/>
    <property type="project" value="RGD"/>
</dbReference>
<dbReference type="GO" id="GO:0010181">
    <property type="term" value="F:FMN binding"/>
    <property type="evidence" value="ECO:0000314"/>
    <property type="project" value="RGD"/>
</dbReference>
<dbReference type="GO" id="GO:0042802">
    <property type="term" value="F:identical protein binding"/>
    <property type="evidence" value="ECO:0000353"/>
    <property type="project" value="RGD"/>
</dbReference>
<dbReference type="GO" id="GO:0019395">
    <property type="term" value="P:fatty acid oxidation"/>
    <property type="evidence" value="ECO:0000266"/>
    <property type="project" value="RGD"/>
</dbReference>
<dbReference type="GO" id="GO:0018924">
    <property type="term" value="P:mandelate metabolic process"/>
    <property type="evidence" value="ECO:0000314"/>
    <property type="project" value="RGD"/>
</dbReference>
<dbReference type="CDD" id="cd02809">
    <property type="entry name" value="alpha_hydroxyacid_oxid_FMN"/>
    <property type="match status" value="1"/>
</dbReference>
<dbReference type="FunFam" id="3.20.20.70:FF:000056">
    <property type="entry name" value="hydroxyacid oxidase 2"/>
    <property type="match status" value="1"/>
</dbReference>
<dbReference type="Gene3D" id="3.20.20.70">
    <property type="entry name" value="Aldolase class I"/>
    <property type="match status" value="1"/>
</dbReference>
<dbReference type="InterPro" id="IPR013785">
    <property type="entry name" value="Aldolase_TIM"/>
</dbReference>
<dbReference type="InterPro" id="IPR012133">
    <property type="entry name" value="Alpha-hydoxy_acid_DH_FMN"/>
</dbReference>
<dbReference type="InterPro" id="IPR000262">
    <property type="entry name" value="FMN-dep_DH"/>
</dbReference>
<dbReference type="InterPro" id="IPR037396">
    <property type="entry name" value="FMN_HAD"/>
</dbReference>
<dbReference type="InterPro" id="IPR008259">
    <property type="entry name" value="FMN_hydac_DH_AS"/>
</dbReference>
<dbReference type="PANTHER" id="PTHR10578:SF149">
    <property type="entry name" value="2-HYDROXYACID OXIDASE 2"/>
    <property type="match status" value="1"/>
</dbReference>
<dbReference type="PANTHER" id="PTHR10578">
    <property type="entry name" value="S -2-HYDROXY-ACID OXIDASE-RELATED"/>
    <property type="match status" value="1"/>
</dbReference>
<dbReference type="Pfam" id="PF01070">
    <property type="entry name" value="FMN_dh"/>
    <property type="match status" value="1"/>
</dbReference>
<dbReference type="PIRSF" id="PIRSF000138">
    <property type="entry name" value="Al-hdrx_acd_dh"/>
    <property type="match status" value="1"/>
</dbReference>
<dbReference type="SUPFAM" id="SSF51395">
    <property type="entry name" value="FMN-linked oxidoreductases"/>
    <property type="match status" value="1"/>
</dbReference>
<dbReference type="PROSITE" id="PS00557">
    <property type="entry name" value="FMN_HYDROXY_ACID_DH_1"/>
    <property type="match status" value="1"/>
</dbReference>
<dbReference type="PROSITE" id="PS51349">
    <property type="entry name" value="FMN_HYDROXY_ACID_DH_2"/>
    <property type="match status" value="1"/>
</dbReference>
<feature type="initiator methionine" description="Removed" evidence="5 7">
    <location>
        <position position="1"/>
    </location>
</feature>
<feature type="chain" id="PRO_0000206322" description="2-Hydroxyacid oxidase 2">
    <location>
        <begin position="2"/>
        <end position="353"/>
    </location>
</feature>
<feature type="domain" description="FMN hydroxy acid dehydrogenase" evidence="3">
    <location>
        <begin position="2"/>
        <end position="353"/>
    </location>
</feature>
<feature type="short sequence motif" description="Microbody targeting signal" evidence="2">
    <location>
        <begin position="351"/>
        <end position="353"/>
    </location>
</feature>
<feature type="active site" description="Proton acceptor" evidence="3 12">
    <location>
        <position position="248"/>
    </location>
</feature>
<feature type="binding site" evidence="4 6 15 16">
    <location>
        <begin position="77"/>
        <end position="79"/>
    </location>
    <ligand>
        <name>FMN</name>
        <dbReference type="ChEBI" id="CHEBI:58210"/>
    </ligand>
</feature>
<feature type="binding site" evidence="4 6 15 16">
    <location>
        <position position="106"/>
    </location>
    <ligand>
        <name>FMN</name>
        <dbReference type="ChEBI" id="CHEBI:58210"/>
    </ligand>
</feature>
<feature type="binding site" evidence="4 6 15 16">
    <location>
        <position position="128"/>
    </location>
    <ligand>
        <name>FMN</name>
        <dbReference type="ChEBI" id="CHEBI:58210"/>
    </ligand>
</feature>
<feature type="binding site" evidence="3">
    <location>
        <position position="130"/>
    </location>
    <ligand>
        <name>a 2-oxocarboxylate</name>
        <dbReference type="ChEBI" id="CHEBI:35179"/>
    </ligand>
</feature>
<feature type="binding site" evidence="4 6 15 16">
    <location>
        <position position="156"/>
    </location>
    <ligand>
        <name>FMN</name>
        <dbReference type="ChEBI" id="CHEBI:58210"/>
    </ligand>
</feature>
<feature type="binding site" evidence="3">
    <location>
        <position position="165"/>
    </location>
    <ligand>
        <name>a 2-oxocarboxylate</name>
        <dbReference type="ChEBI" id="CHEBI:35179"/>
    </ligand>
</feature>
<feature type="binding site" evidence="4 6 15 16">
    <location>
        <position position="224"/>
    </location>
    <ligand>
        <name>FMN</name>
        <dbReference type="ChEBI" id="CHEBI:58210"/>
    </ligand>
</feature>
<feature type="binding site" evidence="3">
    <location>
        <position position="251"/>
    </location>
    <ligand>
        <name>a 2-oxocarboxylate</name>
        <dbReference type="ChEBI" id="CHEBI:35179"/>
    </ligand>
</feature>
<feature type="binding site" evidence="4 6 15 16">
    <location>
        <begin position="279"/>
        <end position="283"/>
    </location>
    <ligand>
        <name>FMN</name>
        <dbReference type="ChEBI" id="CHEBI:58210"/>
    </ligand>
</feature>
<feature type="binding site" evidence="4 6 15 16">
    <location>
        <begin position="302"/>
        <end position="303"/>
    </location>
    <ligand>
        <name>FMN</name>
        <dbReference type="ChEBI" id="CHEBI:58210"/>
    </ligand>
</feature>
<feature type="modified residue" description="Phosphoserine" evidence="17">
    <location>
        <position position="133"/>
    </location>
</feature>
<feature type="helix" evidence="18">
    <location>
        <begin position="6"/>
        <end position="15"/>
    </location>
</feature>
<feature type="helix" evidence="18">
    <location>
        <begin position="19"/>
        <end position="26"/>
    </location>
</feature>
<feature type="helix" evidence="18">
    <location>
        <begin position="33"/>
        <end position="43"/>
    </location>
</feature>
<feature type="strand" evidence="18">
    <location>
        <begin position="62"/>
        <end position="64"/>
    </location>
</feature>
<feature type="strand" evidence="18">
    <location>
        <begin position="67"/>
        <end position="75"/>
    </location>
</feature>
<feature type="helix" evidence="18">
    <location>
        <begin position="81"/>
        <end position="83"/>
    </location>
</feature>
<feature type="helix" evidence="18">
    <location>
        <begin position="88"/>
        <end position="99"/>
    </location>
</feature>
<feature type="strand" evidence="18">
    <location>
        <begin position="102"/>
        <end position="105"/>
    </location>
</feature>
<feature type="helix" evidence="18">
    <location>
        <begin position="113"/>
        <end position="119"/>
    </location>
</feature>
<feature type="strand" evidence="18">
    <location>
        <begin position="124"/>
        <end position="128"/>
    </location>
</feature>
<feature type="helix" evidence="18">
    <location>
        <begin position="135"/>
        <end position="147"/>
    </location>
</feature>
<feature type="strand" evidence="18">
    <location>
        <begin position="153"/>
        <end position="156"/>
    </location>
</feature>
<feature type="helix" evidence="18">
    <location>
        <begin position="166"/>
        <end position="174"/>
    </location>
</feature>
<feature type="helix" evidence="18">
    <location>
        <begin position="177"/>
        <end position="180"/>
    </location>
</feature>
<feature type="helix" evidence="18">
    <location>
        <begin position="207"/>
        <end position="216"/>
    </location>
</feature>
<feature type="strand" evidence="18">
    <location>
        <begin position="221"/>
        <end position="226"/>
    </location>
</feature>
<feature type="helix" evidence="18">
    <location>
        <begin position="229"/>
        <end position="237"/>
    </location>
</feature>
<feature type="strand" evidence="18">
    <location>
        <begin position="241"/>
        <end position="245"/>
    </location>
</feature>
<feature type="helix" evidence="18">
    <location>
        <begin position="248"/>
        <end position="250"/>
    </location>
</feature>
<feature type="helix" evidence="18">
    <location>
        <begin position="259"/>
        <end position="270"/>
    </location>
</feature>
<feature type="strand" evidence="18">
    <location>
        <begin position="273"/>
        <end position="281"/>
    </location>
</feature>
<feature type="helix" evidence="18">
    <location>
        <begin position="285"/>
        <end position="293"/>
    </location>
</feature>
<feature type="strand" evidence="18">
    <location>
        <begin position="297"/>
        <end position="302"/>
    </location>
</feature>
<feature type="helix" evidence="18">
    <location>
        <begin position="303"/>
        <end position="335"/>
    </location>
</feature>
<feature type="helix" evidence="18">
    <location>
        <begin position="340"/>
        <end position="342"/>
    </location>
</feature>
<feature type="helix" evidence="18">
    <location>
        <begin position="345"/>
        <end position="347"/>
    </location>
</feature>
<feature type="strand" evidence="18">
    <location>
        <begin position="348"/>
        <end position="350"/>
    </location>
</feature>
<evidence type="ECO:0000250" key="1">
    <source>
        <dbReference type="UniProtKB" id="Q9NYQ3"/>
    </source>
</evidence>
<evidence type="ECO:0000255" key="2"/>
<evidence type="ECO:0000255" key="3">
    <source>
        <dbReference type="PROSITE-ProRule" id="PRU00683"/>
    </source>
</evidence>
<evidence type="ECO:0000269" key="4">
    <source>
    </source>
</evidence>
<evidence type="ECO:0000269" key="5">
    <source>
    </source>
</evidence>
<evidence type="ECO:0000269" key="6">
    <source>
    </source>
</evidence>
<evidence type="ECO:0000269" key="7">
    <source>
    </source>
</evidence>
<evidence type="ECO:0000269" key="8">
    <source>
    </source>
</evidence>
<evidence type="ECO:0000303" key="9">
    <source>
    </source>
</evidence>
<evidence type="ECO:0000303" key="10">
    <source>
    </source>
</evidence>
<evidence type="ECO:0000303" key="11">
    <source>
    </source>
</evidence>
<evidence type="ECO:0000305" key="12">
    <source>
    </source>
</evidence>
<evidence type="ECO:0000305" key="13">
    <source>
    </source>
</evidence>
<evidence type="ECO:0000305" key="14">
    <source>
    </source>
</evidence>
<evidence type="ECO:0007744" key="15">
    <source>
        <dbReference type="PDB" id="1TB3"/>
    </source>
</evidence>
<evidence type="ECO:0007744" key="16">
    <source>
        <dbReference type="PDB" id="3SGZ"/>
    </source>
</evidence>
<evidence type="ECO:0007744" key="17">
    <source>
    </source>
</evidence>
<evidence type="ECO:0007829" key="18">
    <source>
        <dbReference type="PDB" id="3SGZ"/>
    </source>
</evidence>
<sequence>MPLVCLADFKAHAQKQLSKTSWDFIEGEADDGITYSENIAAFKRIRLRPRYLRDMSKVDTRTTIQGQEISAPICISPTAFHSIAWPDGEKSTARAAQEANICYVISSYASYSLEDIVAAAPEGFRWFQLYMKSDWDFNKQMVQRAEALGFKALVITIDTPVLGNRRRDKRNQLNLEANILLKDLRALKEEKPTQSVPVSFPKASFCWNDLSLLQSITRLPIILKGILTKEDAELAMKHNVQGIVVSNHGGRQLDEVSASIDALREVVAAVKGKIEVYMDGGVRTGTDVLKALALGARCIFLGRPILWGLACKGEDGVKEVLDILTAELHRCMTLSGCQSVAEISPDLIQFSRL</sequence>
<protein>
    <recommendedName>
        <fullName>2-Hydroxyacid oxidase 2</fullName>
        <shortName>HAOX2</shortName>
        <ecNumber evidence="12 13 14">1.1.3.15</ecNumber>
    </recommendedName>
    <alternativeName>
        <fullName>(S)-2-hydroxy-acid oxidase, peroxisomal</fullName>
    </alternativeName>
    <alternativeName>
        <fullName evidence="10">Long chain alpha-hydroxy acid oxidase</fullName>
    </alternativeName>
    <alternativeName>
        <fullName evidence="9 11">Long-chain L-2-hydroxy acid oxidase</fullName>
        <shortName evidence="9">LCHAO</shortName>
    </alternativeName>
</protein>
<reference key="1">
    <citation type="journal article" date="1993" name="Eur. J. Biochem.">
        <title>Molecular cloning and nucleotide sequence of cDNA encoding rat kidney long-chain L-2-hydroxy acid oxidase. Expression of the catalytically active recombinant protein as a chimaera.</title>
        <authorList>
            <person name="Belmouden A."/>
            <person name="Le K.H.D."/>
            <person name="Lederer F."/>
            <person name="Garchon H.J."/>
        </authorList>
    </citation>
    <scope>NUCLEOTIDE SEQUENCE [MRNA]</scope>
    <scope>TISSUE SPECIFICITY</scope>
    <scope>SUBUNIT</scope>
    <scope>COFACTOR</scope>
    <scope>CATALYTIC ACTIVITY</scope>
    <scope>BIOPHYSICOCHEMICAL PROPERTIES</scope>
    <source>
        <strain>Wistar</strain>
        <tissue>Kidney</tissue>
    </source>
</reference>
<reference key="2">
    <citation type="journal article" date="2004" name="Genome Res.">
        <title>The status, quality, and expansion of the NIH full-length cDNA project: the Mammalian Gene Collection (MGC).</title>
        <authorList>
            <consortium name="The MGC Project Team"/>
        </authorList>
    </citation>
    <scope>NUCLEOTIDE SEQUENCE [LARGE SCALE MRNA]</scope>
    <source>
        <tissue>Testis</tissue>
    </source>
</reference>
<reference key="3">
    <citation type="journal article" date="1991" name="J. Biol. Chem.">
        <title>Amino acid sequence of long chain alpha-hydroxy acid oxidase from rat kidney, a member of the family of FMN-dependent alpha-hydroxy acid-oxidizing enzymes.</title>
        <authorList>
            <person name="Le K.H.D."/>
            <person name="Lederer F."/>
        </authorList>
    </citation>
    <scope>PROTEIN SEQUENCE OF 2-353</scope>
    <source>
        <tissue>Kidney</tissue>
    </source>
</reference>
<reference key="4">
    <citation type="journal article" date="1988" name="Biochemistry">
        <title>Rat kidney L-2-hydroxyacid oxidase. Structural and mechanistic comparison with flavocytochrome b2 from baker's yeast.</title>
        <authorList>
            <person name="Urban P."/>
            <person name="Chirat I."/>
            <person name="Lederer F."/>
        </authorList>
    </citation>
    <scope>PROTEIN SEQUENCE OF 2-41</scope>
    <scope>FUNCTION</scope>
    <scope>CATALYTIC ACTIVITY</scope>
    <scope>BIOPHYSICOCHEMICAL PROPERTIES</scope>
    <scope>COFACTOR</scope>
</reference>
<reference key="5">
    <citation type="journal article" date="2012" name="Nat. Commun.">
        <title>Quantitative maps of protein phosphorylation sites across 14 different rat organs and tissues.</title>
        <authorList>
            <person name="Lundby A."/>
            <person name="Secher A."/>
            <person name="Lage K."/>
            <person name="Nordsborg N.B."/>
            <person name="Dmytriyev A."/>
            <person name="Lundby C."/>
            <person name="Olsen J.V."/>
        </authorList>
    </citation>
    <scope>PHOSPHORYLATION [LARGE SCALE ANALYSIS] AT SER-133</scope>
    <scope>IDENTIFICATION BY MASS SPECTROMETRY [LARGE SCALE ANALYSIS]</scope>
</reference>
<reference evidence="15" key="6">
    <citation type="journal article" date="2005" name="Biochemistry">
        <title>Crystal structure analysis of recombinant rat kidney long chain hydroxy acid oxidase.</title>
        <authorList>
            <person name="Cunane L.M."/>
            <person name="Barton J.D."/>
            <person name="Chen Z.-W."/>
            <person name="Le K.H.D."/>
            <person name="Amar D."/>
            <person name="Lederer F."/>
            <person name="Mathews F.S."/>
        </authorList>
    </citation>
    <scope>X-RAY CRYSTALLOGRAPHY (2.30 ANGSTROMS) IN COMPLEX WITH FMN</scope>
    <scope>FUNCTION</scope>
    <scope>CATALYTIC ACTIVITY</scope>
    <scope>BIOPHYSICOCHEMICAL PROPERTIES</scope>
    <scope>COFACTOR</scope>
    <scope>SUBUNIT</scope>
    <scope>ACTIVE SITE</scope>
</reference>
<reference evidence="16" key="7">
    <citation type="journal article" date="2012" name="Biochimie">
        <title>High resolution crystal structure of rat long chain hydroxy acid oxidase in complex with the inhibitor 4-carboxy-5-[(4-chlorophenyl)sulfanyl]-1,2,3-thiadiazole. Implications for inhibitor specificity and drug design.</title>
        <authorList>
            <person name="Chen Z.W."/>
            <person name="Vignaud C."/>
            <person name="Jaafar A."/>
            <person name="Levy B."/>
            <person name="Gueritte F."/>
            <person name="Guenard D."/>
            <person name="Lederer F."/>
            <person name="Mathews F.S."/>
        </authorList>
    </citation>
    <scope>X-RAY CRYSTALLOGRAPHY (1.35 ANGSTROMS) OF 2-353 IN COMPLEX WITH 4-CARBOXY-5-[(4-CHLOROPHENYL)SULFANYL]-1,2,3-THIADIAZOLE INHIBITOR AND FMN</scope>
    <scope>COFACTOR</scope>
    <scope>ACTIVITY REGULATION</scope>
</reference>
<proteinExistence type="evidence at protein level"/>
<gene>
    <name type="primary">Hao2</name>
    <name type="synonym">Hao3</name>
    <name type="synonym">Haox2</name>
</gene>
<accession>Q07523</accession>
<organism>
    <name type="scientific">Rattus norvegicus</name>
    <name type="common">Rat</name>
    <dbReference type="NCBI Taxonomy" id="10116"/>
    <lineage>
        <taxon>Eukaryota</taxon>
        <taxon>Metazoa</taxon>
        <taxon>Chordata</taxon>
        <taxon>Craniata</taxon>
        <taxon>Vertebrata</taxon>
        <taxon>Euteleostomi</taxon>
        <taxon>Mammalia</taxon>
        <taxon>Eutheria</taxon>
        <taxon>Euarchontoglires</taxon>
        <taxon>Glires</taxon>
        <taxon>Rodentia</taxon>
        <taxon>Myomorpha</taxon>
        <taxon>Muroidea</taxon>
        <taxon>Muridae</taxon>
        <taxon>Murinae</taxon>
        <taxon>Rattus</taxon>
    </lineage>
</organism>